<reference key="1">
    <citation type="journal article" date="1988" name="Nature">
        <title>A family of human CCAAT-box-binding proteins active in transcription and DNA replication: cloning and expression of multiple cDNAs.</title>
        <authorList>
            <person name="Santoro C."/>
            <person name="Mermod N."/>
            <person name="Andrews P.C."/>
            <person name="Tjian R."/>
        </authorList>
    </citation>
    <scope>NUCLEOTIDE SEQUENCE [MRNA] (ISOFORMS 1; 2 AND 3)</scope>
    <scope>PARTIAL PROTEIN SEQUENCE</scope>
</reference>
<reference key="2">
    <citation type="journal article" date="1996" name="Nucleic Acids Res.">
        <title>CTF5 -- a new transcriptional activator of the NFI/CTF family.</title>
        <authorList>
            <person name="Wenzelides S."/>
            <person name="Altmann S."/>
            <person name="Wendler W."/>
            <person name="Winnacker E.L."/>
        </authorList>
    </citation>
    <scope>NUCLEOTIDE SEQUENCE [MRNA] (ISOFORM 5)</scope>
</reference>
<reference key="3">
    <citation type="journal article" date="2004" name="Nat. Genet.">
        <title>Complete sequencing and characterization of 21,243 full-length human cDNAs.</title>
        <authorList>
            <person name="Ota T."/>
            <person name="Suzuki Y."/>
            <person name="Nishikawa T."/>
            <person name="Otsuki T."/>
            <person name="Sugiyama T."/>
            <person name="Irie R."/>
            <person name="Wakamatsu A."/>
            <person name="Hayashi K."/>
            <person name="Sato H."/>
            <person name="Nagai K."/>
            <person name="Kimura K."/>
            <person name="Makita H."/>
            <person name="Sekine M."/>
            <person name="Obayashi M."/>
            <person name="Nishi T."/>
            <person name="Shibahara T."/>
            <person name="Tanaka T."/>
            <person name="Ishii S."/>
            <person name="Yamamoto J."/>
            <person name="Saito K."/>
            <person name="Kawai Y."/>
            <person name="Isono Y."/>
            <person name="Nakamura Y."/>
            <person name="Nagahari K."/>
            <person name="Murakami K."/>
            <person name="Yasuda T."/>
            <person name="Iwayanagi T."/>
            <person name="Wagatsuma M."/>
            <person name="Shiratori A."/>
            <person name="Sudo H."/>
            <person name="Hosoiri T."/>
            <person name="Kaku Y."/>
            <person name="Kodaira H."/>
            <person name="Kondo H."/>
            <person name="Sugawara M."/>
            <person name="Takahashi M."/>
            <person name="Kanda K."/>
            <person name="Yokoi T."/>
            <person name="Furuya T."/>
            <person name="Kikkawa E."/>
            <person name="Omura Y."/>
            <person name="Abe K."/>
            <person name="Kamihara K."/>
            <person name="Katsuta N."/>
            <person name="Sato K."/>
            <person name="Tanikawa M."/>
            <person name="Yamazaki M."/>
            <person name="Ninomiya K."/>
            <person name="Ishibashi T."/>
            <person name="Yamashita H."/>
            <person name="Murakawa K."/>
            <person name="Fujimori K."/>
            <person name="Tanai H."/>
            <person name="Kimata M."/>
            <person name="Watanabe M."/>
            <person name="Hiraoka S."/>
            <person name="Chiba Y."/>
            <person name="Ishida S."/>
            <person name="Ono Y."/>
            <person name="Takiguchi S."/>
            <person name="Watanabe S."/>
            <person name="Yosida M."/>
            <person name="Hotuta T."/>
            <person name="Kusano J."/>
            <person name="Kanehori K."/>
            <person name="Takahashi-Fujii A."/>
            <person name="Hara H."/>
            <person name="Tanase T.-O."/>
            <person name="Nomura Y."/>
            <person name="Togiya S."/>
            <person name="Komai F."/>
            <person name="Hara R."/>
            <person name="Takeuchi K."/>
            <person name="Arita M."/>
            <person name="Imose N."/>
            <person name="Musashino K."/>
            <person name="Yuuki H."/>
            <person name="Oshima A."/>
            <person name="Sasaki N."/>
            <person name="Aotsuka S."/>
            <person name="Yoshikawa Y."/>
            <person name="Matsunawa H."/>
            <person name="Ichihara T."/>
            <person name="Shiohata N."/>
            <person name="Sano S."/>
            <person name="Moriya S."/>
            <person name="Momiyama H."/>
            <person name="Satoh N."/>
            <person name="Takami S."/>
            <person name="Terashima Y."/>
            <person name="Suzuki O."/>
            <person name="Nakagawa S."/>
            <person name="Senoh A."/>
            <person name="Mizoguchi H."/>
            <person name="Goto Y."/>
            <person name="Shimizu F."/>
            <person name="Wakebe H."/>
            <person name="Hishigaki H."/>
            <person name="Watanabe T."/>
            <person name="Sugiyama A."/>
            <person name="Takemoto M."/>
            <person name="Kawakami B."/>
            <person name="Yamazaki M."/>
            <person name="Watanabe K."/>
            <person name="Kumagai A."/>
            <person name="Itakura S."/>
            <person name="Fukuzumi Y."/>
            <person name="Fujimori Y."/>
            <person name="Komiyama M."/>
            <person name="Tashiro H."/>
            <person name="Tanigami A."/>
            <person name="Fujiwara T."/>
            <person name="Ono T."/>
            <person name="Yamada K."/>
            <person name="Fujii Y."/>
            <person name="Ozaki K."/>
            <person name="Hirao M."/>
            <person name="Ohmori Y."/>
            <person name="Kawabata A."/>
            <person name="Hikiji T."/>
            <person name="Kobatake N."/>
            <person name="Inagaki H."/>
            <person name="Ikema Y."/>
            <person name="Okamoto S."/>
            <person name="Okitani R."/>
            <person name="Kawakami T."/>
            <person name="Noguchi S."/>
            <person name="Itoh T."/>
            <person name="Shigeta K."/>
            <person name="Senba T."/>
            <person name="Matsumura K."/>
            <person name="Nakajima Y."/>
            <person name="Mizuno T."/>
            <person name="Morinaga M."/>
            <person name="Sasaki M."/>
            <person name="Togashi T."/>
            <person name="Oyama M."/>
            <person name="Hata H."/>
            <person name="Watanabe M."/>
            <person name="Komatsu T."/>
            <person name="Mizushima-Sugano J."/>
            <person name="Satoh T."/>
            <person name="Shirai Y."/>
            <person name="Takahashi Y."/>
            <person name="Nakagawa K."/>
            <person name="Okumura K."/>
            <person name="Nagase T."/>
            <person name="Nomura N."/>
            <person name="Kikuchi H."/>
            <person name="Masuho Y."/>
            <person name="Yamashita R."/>
            <person name="Nakai K."/>
            <person name="Yada T."/>
            <person name="Nakamura Y."/>
            <person name="Ohara O."/>
            <person name="Isogai T."/>
            <person name="Sugano S."/>
        </authorList>
    </citation>
    <scope>NUCLEOTIDE SEQUENCE [LARGE SCALE MRNA] (ISOFORMS 1; 2 AND 6)</scope>
    <source>
        <tissue>Caudate nucleus</tissue>
        <tissue>Heart</tissue>
        <tissue>Uterus</tissue>
    </source>
</reference>
<reference key="4">
    <citation type="journal article" date="2004" name="Nature">
        <title>The DNA sequence and biology of human chromosome 19.</title>
        <authorList>
            <person name="Grimwood J."/>
            <person name="Gordon L.A."/>
            <person name="Olsen A.S."/>
            <person name="Terry A."/>
            <person name="Schmutz J."/>
            <person name="Lamerdin J.E."/>
            <person name="Hellsten U."/>
            <person name="Goodstein D."/>
            <person name="Couronne O."/>
            <person name="Tran-Gyamfi M."/>
            <person name="Aerts A."/>
            <person name="Altherr M."/>
            <person name="Ashworth L."/>
            <person name="Bajorek E."/>
            <person name="Black S."/>
            <person name="Branscomb E."/>
            <person name="Caenepeel S."/>
            <person name="Carrano A.V."/>
            <person name="Caoile C."/>
            <person name="Chan Y.M."/>
            <person name="Christensen M."/>
            <person name="Cleland C.A."/>
            <person name="Copeland A."/>
            <person name="Dalin E."/>
            <person name="Dehal P."/>
            <person name="Denys M."/>
            <person name="Detter J.C."/>
            <person name="Escobar J."/>
            <person name="Flowers D."/>
            <person name="Fotopulos D."/>
            <person name="Garcia C."/>
            <person name="Georgescu A.M."/>
            <person name="Glavina T."/>
            <person name="Gomez M."/>
            <person name="Gonzales E."/>
            <person name="Groza M."/>
            <person name="Hammon N."/>
            <person name="Hawkins T."/>
            <person name="Haydu L."/>
            <person name="Ho I."/>
            <person name="Huang W."/>
            <person name="Israni S."/>
            <person name="Jett J."/>
            <person name="Kadner K."/>
            <person name="Kimball H."/>
            <person name="Kobayashi A."/>
            <person name="Larionov V."/>
            <person name="Leem S.-H."/>
            <person name="Lopez F."/>
            <person name="Lou Y."/>
            <person name="Lowry S."/>
            <person name="Malfatti S."/>
            <person name="Martinez D."/>
            <person name="McCready P.M."/>
            <person name="Medina C."/>
            <person name="Morgan J."/>
            <person name="Nelson K."/>
            <person name="Nolan M."/>
            <person name="Ovcharenko I."/>
            <person name="Pitluck S."/>
            <person name="Pollard M."/>
            <person name="Popkie A.P."/>
            <person name="Predki P."/>
            <person name="Quan G."/>
            <person name="Ramirez L."/>
            <person name="Rash S."/>
            <person name="Retterer J."/>
            <person name="Rodriguez A."/>
            <person name="Rogers S."/>
            <person name="Salamov A."/>
            <person name="Salazar A."/>
            <person name="She X."/>
            <person name="Smith D."/>
            <person name="Slezak T."/>
            <person name="Solovyev V."/>
            <person name="Thayer N."/>
            <person name="Tice H."/>
            <person name="Tsai M."/>
            <person name="Ustaszewska A."/>
            <person name="Vo N."/>
            <person name="Wagner M."/>
            <person name="Wheeler J."/>
            <person name="Wu K."/>
            <person name="Xie G."/>
            <person name="Yang J."/>
            <person name="Dubchak I."/>
            <person name="Furey T.S."/>
            <person name="DeJong P."/>
            <person name="Dickson M."/>
            <person name="Gordon D."/>
            <person name="Eichler E.E."/>
            <person name="Pennacchio L.A."/>
            <person name="Richardson P."/>
            <person name="Stubbs L."/>
            <person name="Rokhsar D.S."/>
            <person name="Myers R.M."/>
            <person name="Rubin E.M."/>
            <person name="Lucas S.M."/>
        </authorList>
    </citation>
    <scope>NUCLEOTIDE SEQUENCE [LARGE SCALE GENOMIC DNA]</scope>
</reference>
<reference key="5">
    <citation type="submission" date="2005-09" db="EMBL/GenBank/DDBJ databases">
        <authorList>
            <person name="Mural R.J."/>
            <person name="Istrail S."/>
            <person name="Sutton G.G."/>
            <person name="Florea L."/>
            <person name="Halpern A.L."/>
            <person name="Mobarry C.M."/>
            <person name="Lippert R."/>
            <person name="Walenz B."/>
            <person name="Shatkay H."/>
            <person name="Dew I."/>
            <person name="Miller J.R."/>
            <person name="Flanigan M.J."/>
            <person name="Edwards N.J."/>
            <person name="Bolanos R."/>
            <person name="Fasulo D."/>
            <person name="Halldorsson B.V."/>
            <person name="Hannenhalli S."/>
            <person name="Turner R."/>
            <person name="Yooseph S."/>
            <person name="Lu F."/>
            <person name="Nusskern D.R."/>
            <person name="Shue B.C."/>
            <person name="Zheng X.H."/>
            <person name="Zhong F."/>
            <person name="Delcher A.L."/>
            <person name="Huson D.H."/>
            <person name="Kravitz S.A."/>
            <person name="Mouchard L."/>
            <person name="Reinert K."/>
            <person name="Remington K.A."/>
            <person name="Clark A.G."/>
            <person name="Waterman M.S."/>
            <person name="Eichler E.E."/>
            <person name="Adams M.D."/>
            <person name="Hunkapiller M.W."/>
            <person name="Myers E.W."/>
            <person name="Venter J.C."/>
        </authorList>
    </citation>
    <scope>NUCLEOTIDE SEQUENCE [LARGE SCALE GENOMIC DNA]</scope>
</reference>
<reference key="6">
    <citation type="journal article" date="2004" name="Genome Res.">
        <title>The status, quality, and expansion of the NIH full-length cDNA project: the Mammalian Gene Collection (MGC).</title>
        <authorList>
            <consortium name="The MGC Project Team"/>
        </authorList>
    </citation>
    <scope>NUCLEOTIDE SEQUENCE [LARGE SCALE MRNA] (ISOFORM 5)</scope>
    <source>
        <tissue>Uterus</tissue>
    </source>
</reference>
<reference key="7">
    <citation type="journal article" date="2006" name="Cell">
        <title>Global, in vivo, and site-specific phosphorylation dynamics in signaling networks.</title>
        <authorList>
            <person name="Olsen J.V."/>
            <person name="Blagoev B."/>
            <person name="Gnad F."/>
            <person name="Macek B."/>
            <person name="Kumar C."/>
            <person name="Mortensen P."/>
            <person name="Mann M."/>
        </authorList>
    </citation>
    <scope>PHOSPHORYLATION [LARGE SCALE ANALYSIS] AT SER-333</scope>
    <scope>IDENTIFICATION BY MASS SPECTROMETRY [LARGE SCALE ANALYSIS]</scope>
    <source>
        <tissue>Cervix carcinoma</tissue>
    </source>
</reference>
<reference key="8">
    <citation type="journal article" date="2008" name="J. Proteome Res.">
        <title>Combining protein-based IMAC, peptide-based IMAC, and MudPIT for efficient phosphoproteomic analysis.</title>
        <authorList>
            <person name="Cantin G.T."/>
            <person name="Yi W."/>
            <person name="Lu B."/>
            <person name="Park S.K."/>
            <person name="Xu T."/>
            <person name="Lee J.-D."/>
            <person name="Yates J.R. III"/>
        </authorList>
    </citation>
    <scope>PHOSPHORYLATION [LARGE SCALE ANALYSIS] AT SER-343</scope>
    <scope>IDENTIFICATION BY MASS SPECTROMETRY [LARGE SCALE ANALYSIS]</scope>
    <source>
        <tissue>Cervix carcinoma</tissue>
    </source>
</reference>
<reference key="9">
    <citation type="journal article" date="2008" name="Mol. Cell">
        <title>Kinase-selective enrichment enables quantitative phosphoproteomics of the kinome across the cell cycle.</title>
        <authorList>
            <person name="Daub H."/>
            <person name="Olsen J.V."/>
            <person name="Bairlein M."/>
            <person name="Gnad F."/>
            <person name="Oppermann F.S."/>
            <person name="Korner R."/>
            <person name="Greff Z."/>
            <person name="Keri G."/>
            <person name="Stemmann O."/>
            <person name="Mann M."/>
        </authorList>
    </citation>
    <scope>IDENTIFICATION BY MASS SPECTROMETRY [LARGE SCALE ANALYSIS]</scope>
    <source>
        <tissue>Cervix carcinoma</tissue>
    </source>
</reference>
<reference key="10">
    <citation type="journal article" date="2008" name="Proc. Natl. Acad. Sci. U.S.A.">
        <title>A quantitative atlas of mitotic phosphorylation.</title>
        <authorList>
            <person name="Dephoure N."/>
            <person name="Zhou C."/>
            <person name="Villen J."/>
            <person name="Beausoleil S.A."/>
            <person name="Bakalarski C.E."/>
            <person name="Elledge S.J."/>
            <person name="Gygi S.P."/>
        </authorList>
    </citation>
    <scope>PHOSPHORYLATION [LARGE SCALE ANALYSIS] AT SER-294; SER-323; SER-333 AND SER-339</scope>
    <scope>IDENTIFICATION BY MASS SPECTROMETRY [LARGE SCALE ANALYSIS]</scope>
    <source>
        <tissue>Cervix carcinoma</tissue>
    </source>
</reference>
<reference key="11">
    <citation type="journal article" date="2009" name="Sci. Signal.">
        <title>Quantitative phosphoproteomic analysis of T cell receptor signaling reveals system-wide modulation of protein-protein interactions.</title>
        <authorList>
            <person name="Mayya V."/>
            <person name="Lundgren D.H."/>
            <person name="Hwang S.-I."/>
            <person name="Rezaul K."/>
            <person name="Wu L."/>
            <person name="Eng J.K."/>
            <person name="Rodionov V."/>
            <person name="Han D.K."/>
        </authorList>
    </citation>
    <scope>PHOSPHORYLATION [LARGE SCALE ANALYSIS] AT SER-333</scope>
    <scope>IDENTIFICATION BY MASS SPECTROMETRY [LARGE SCALE ANALYSIS]</scope>
    <source>
        <tissue>Leukemic T-cell</tissue>
    </source>
</reference>
<reference key="12">
    <citation type="journal article" date="2010" name="Sci. Signal.">
        <title>Quantitative phosphoproteomics reveals widespread full phosphorylation site occupancy during mitosis.</title>
        <authorList>
            <person name="Olsen J.V."/>
            <person name="Vermeulen M."/>
            <person name="Santamaria A."/>
            <person name="Kumar C."/>
            <person name="Miller M.L."/>
            <person name="Jensen L.J."/>
            <person name="Gnad F."/>
            <person name="Cox J."/>
            <person name="Jensen T.S."/>
            <person name="Nigg E.A."/>
            <person name="Brunak S."/>
            <person name="Mann M."/>
        </authorList>
    </citation>
    <scope>ACETYLATION [LARGE SCALE ANALYSIS] AT MET-1</scope>
    <scope>PHOSPHORYLATION [LARGE SCALE ANALYSIS] AT SER-194; SER-323; SER-333; SER-337; SER-339; SER-343 AND SER-487</scope>
    <scope>IDENTIFICATION BY MASS SPECTROMETRY [LARGE SCALE ANALYSIS]</scope>
    <source>
        <tissue>Cervix carcinoma</tissue>
    </source>
</reference>
<reference key="13">
    <citation type="journal article" date="2013" name="J. Proteome Res.">
        <title>Toward a comprehensive characterization of a human cancer cell phosphoproteome.</title>
        <authorList>
            <person name="Zhou H."/>
            <person name="Di Palma S."/>
            <person name="Preisinger C."/>
            <person name="Peng M."/>
            <person name="Polat A.N."/>
            <person name="Heck A.J."/>
            <person name="Mohammed S."/>
        </authorList>
    </citation>
    <scope>PHOSPHORYLATION [LARGE SCALE ANALYSIS] AT SER-305; SER-323; SER-333; SER-339 AND SER-343</scope>
    <scope>IDENTIFICATION BY MASS SPECTROMETRY [LARGE SCALE ANALYSIS]</scope>
    <source>
        <tissue>Cervix carcinoma</tissue>
        <tissue>Erythroleukemia</tissue>
    </source>
</reference>
<reference key="14">
    <citation type="journal article" date="2014" name="J. Proteomics">
        <title>An enzyme assisted RP-RPLC approach for in-depth analysis of human liver phosphoproteome.</title>
        <authorList>
            <person name="Bian Y."/>
            <person name="Song C."/>
            <person name="Cheng K."/>
            <person name="Dong M."/>
            <person name="Wang F."/>
            <person name="Huang J."/>
            <person name="Sun D."/>
            <person name="Wang L."/>
            <person name="Ye M."/>
            <person name="Zou H."/>
        </authorList>
    </citation>
    <scope>PHOSPHORYLATION [LARGE SCALE ANALYSIS] AT SER-194; SER-304; SER-333; SER-339; SER-343; SER-475 AND SER-477</scope>
    <scope>IDENTIFICATION BY MASS SPECTROMETRY [LARGE SCALE ANALYSIS]</scope>
    <source>
        <tissue>Liver</tissue>
    </source>
</reference>
<reference key="15">
    <citation type="journal article" date="2014" name="Mol. Cell. Proteomics">
        <title>Immunoaffinity enrichment and mass spectrometry analysis of protein methylation.</title>
        <authorList>
            <person name="Guo A."/>
            <person name="Gu H."/>
            <person name="Zhou J."/>
            <person name="Mulhern D."/>
            <person name="Wang Y."/>
            <person name="Lee K.A."/>
            <person name="Yang V."/>
            <person name="Aguiar M."/>
            <person name="Kornhauser J."/>
            <person name="Jia X."/>
            <person name="Ren J."/>
            <person name="Beausoleil S.A."/>
            <person name="Silva J.C."/>
            <person name="Vemulapalli V."/>
            <person name="Bedford M.T."/>
            <person name="Comb M.J."/>
        </authorList>
    </citation>
    <scope>METHYLATION [LARGE SCALE ANALYSIS] AT ARG-365; ARG-395 AND ARG-451</scope>
    <scope>IDENTIFICATION BY MASS SPECTROMETRY [LARGE SCALE ANALYSIS]</scope>
    <source>
        <tissue>Colon carcinoma</tissue>
    </source>
</reference>
<reference key="16">
    <citation type="journal article" date="2020" name="Cell. Mol. Life Sci.">
        <title>The evolution of the 9aaTAD domain in Sp2 proteins: inactivation with valines and intron reservoirs.</title>
        <authorList>
            <person name="Piskacek M."/>
            <person name="Havelka M."/>
            <person name="Jendruchova K."/>
            <person name="Knight A."/>
            <person name="Keegan L.P."/>
        </authorList>
    </citation>
    <scope>9AATAD MOTIF</scope>
</reference>
<name>NFIC_HUMAN</name>
<accession>P08651</accession>
<accession>A8K1H0</accession>
<accession>B7Z4U5</accession>
<accession>B7Z9C3</accession>
<accession>K7EMU1</accession>
<accession>P08652</accession>
<accession>Q14932</accession>
<accession>Q9UPJ3</accession>
<accession>Q9UPJ9</accession>
<accession>Q9UPK0</accession>
<accession>Q9UPK1</accession>
<evidence type="ECO:0000250" key="1">
    <source>
        <dbReference type="UniProtKB" id="P70255"/>
    </source>
</evidence>
<evidence type="ECO:0000255" key="2">
    <source>
        <dbReference type="PROSITE-ProRule" id="PRU00436"/>
    </source>
</evidence>
<evidence type="ECO:0000256" key="3">
    <source>
        <dbReference type="SAM" id="MobiDB-lite"/>
    </source>
</evidence>
<evidence type="ECO:0000269" key="4">
    <source>
    </source>
</evidence>
<evidence type="ECO:0000303" key="5">
    <source>
    </source>
</evidence>
<evidence type="ECO:0000303" key="6">
    <source>
    </source>
</evidence>
<evidence type="ECO:0000303" key="7">
    <source>
    </source>
</evidence>
<evidence type="ECO:0000303" key="8">
    <source>
    </source>
</evidence>
<evidence type="ECO:0000305" key="9"/>
<evidence type="ECO:0007744" key="10">
    <source>
    </source>
</evidence>
<evidence type="ECO:0007744" key="11">
    <source>
    </source>
</evidence>
<evidence type="ECO:0007744" key="12">
    <source>
    </source>
</evidence>
<evidence type="ECO:0007744" key="13">
    <source>
    </source>
</evidence>
<evidence type="ECO:0007744" key="14">
    <source>
    </source>
</evidence>
<evidence type="ECO:0007744" key="15">
    <source>
    </source>
</evidence>
<evidence type="ECO:0007744" key="16">
    <source>
    </source>
</evidence>
<evidence type="ECO:0007744" key="17">
    <source>
    </source>
</evidence>
<dbReference type="EMBL" id="X12492">
    <property type="protein sequence ID" value="CAA31012.1"/>
    <property type="molecule type" value="mRNA"/>
</dbReference>
<dbReference type="EMBL" id="X92857">
    <property type="protein sequence ID" value="CAA63440.1"/>
    <property type="molecule type" value="mRNA"/>
</dbReference>
<dbReference type="EMBL" id="AK289885">
    <property type="protein sequence ID" value="BAF82574.1"/>
    <property type="molecule type" value="mRNA"/>
</dbReference>
<dbReference type="EMBL" id="AK297867">
    <property type="protein sequence ID" value="BAH12681.1"/>
    <property type="molecule type" value="mRNA"/>
</dbReference>
<dbReference type="EMBL" id="AK304816">
    <property type="protein sequence ID" value="BAH14259.1"/>
    <property type="molecule type" value="mRNA"/>
</dbReference>
<dbReference type="EMBL" id="AC005514">
    <property type="protein sequence ID" value="AAC32593.1"/>
    <property type="molecule type" value="Genomic_DNA"/>
</dbReference>
<dbReference type="EMBL" id="AC005514">
    <property type="protein sequence ID" value="AAC32594.1"/>
    <property type="molecule type" value="Genomic_DNA"/>
</dbReference>
<dbReference type="EMBL" id="AC005551">
    <property type="protein sequence ID" value="AAC33190.1"/>
    <property type="molecule type" value="Genomic_DNA"/>
</dbReference>
<dbReference type="EMBL" id="AC005551">
    <property type="protein sequence ID" value="AAC33191.1"/>
    <property type="molecule type" value="Genomic_DNA"/>
</dbReference>
<dbReference type="EMBL" id="AC005551">
    <property type="protein sequence ID" value="AAC33192.1"/>
    <property type="molecule type" value="Genomic_DNA"/>
</dbReference>
<dbReference type="EMBL" id="AC005778">
    <property type="protein sequence ID" value="AAC62842.1"/>
    <property type="molecule type" value="Genomic_DNA"/>
</dbReference>
<dbReference type="EMBL" id="CH471139">
    <property type="protein sequence ID" value="EAW69325.1"/>
    <property type="molecule type" value="Genomic_DNA"/>
</dbReference>
<dbReference type="EMBL" id="CH471139">
    <property type="protein sequence ID" value="EAW69326.1"/>
    <property type="molecule type" value="Genomic_DNA"/>
</dbReference>
<dbReference type="EMBL" id="BC012120">
    <property type="protein sequence ID" value="AAH12120.1"/>
    <property type="molecule type" value="mRNA"/>
</dbReference>
<dbReference type="CCDS" id="CCDS12107.1">
    <molecule id="P08651-5"/>
</dbReference>
<dbReference type="CCDS" id="CCDS45914.1">
    <molecule id="P08651-2"/>
</dbReference>
<dbReference type="CCDS" id="CCDS58640.1">
    <molecule id="P08651-3"/>
</dbReference>
<dbReference type="CCDS" id="CCDS59330.1">
    <molecule id="P08651-1"/>
</dbReference>
<dbReference type="CCDS" id="CCDS59331.1">
    <molecule id="P08651-6"/>
</dbReference>
<dbReference type="PIR" id="B33416">
    <property type="entry name" value="B33416"/>
</dbReference>
<dbReference type="PIR" id="S01038">
    <property type="entry name" value="S01038"/>
</dbReference>
<dbReference type="RefSeq" id="NP_001231931.1">
    <molecule id="P08651-1"/>
    <property type="nucleotide sequence ID" value="NM_001245002.2"/>
</dbReference>
<dbReference type="RefSeq" id="NP_001231933.1">
    <molecule id="P08651-6"/>
    <property type="nucleotide sequence ID" value="NM_001245004.2"/>
</dbReference>
<dbReference type="RefSeq" id="NP_001231934.1">
    <molecule id="P08651-3"/>
    <property type="nucleotide sequence ID" value="NM_001245005.2"/>
</dbReference>
<dbReference type="RefSeq" id="NP_005588.2">
    <molecule id="P08651-5"/>
    <property type="nucleotide sequence ID" value="NM_005597.3"/>
</dbReference>
<dbReference type="RefSeq" id="NP_995315.1">
    <molecule id="P08651-2"/>
    <property type="nucleotide sequence ID" value="NM_205843.3"/>
</dbReference>
<dbReference type="RefSeq" id="XP_016882324.1">
    <property type="nucleotide sequence ID" value="XM_017026835.1"/>
</dbReference>
<dbReference type="SMR" id="P08651"/>
<dbReference type="BioGRID" id="110854">
    <property type="interactions" value="209"/>
</dbReference>
<dbReference type="DIP" id="DIP-44692N"/>
<dbReference type="FunCoup" id="P08651">
    <property type="interactions" value="2639"/>
</dbReference>
<dbReference type="IntAct" id="P08651">
    <property type="interactions" value="148"/>
</dbReference>
<dbReference type="MINT" id="P08651"/>
<dbReference type="STRING" id="9606.ENSP00000396843"/>
<dbReference type="GlyCosmos" id="P08651">
    <property type="glycosylation" value="1 site, 1 glycan"/>
</dbReference>
<dbReference type="GlyGen" id="P08651">
    <property type="glycosylation" value="9 sites, 1 O-linked glycan (9 sites)"/>
</dbReference>
<dbReference type="iPTMnet" id="P08651"/>
<dbReference type="PhosphoSitePlus" id="P08651"/>
<dbReference type="SwissPalm" id="P08651"/>
<dbReference type="BioMuta" id="NFIC"/>
<dbReference type="DMDM" id="14195672"/>
<dbReference type="jPOST" id="P08651"/>
<dbReference type="MassIVE" id="P08651"/>
<dbReference type="PaxDb" id="9606-ENSP00000396843"/>
<dbReference type="PeptideAtlas" id="P08651"/>
<dbReference type="ProteomicsDB" id="52148">
    <molecule id="P08651-1"/>
</dbReference>
<dbReference type="ProteomicsDB" id="52149">
    <molecule id="P08651-2"/>
</dbReference>
<dbReference type="ProteomicsDB" id="52150">
    <molecule id="P08651-3"/>
</dbReference>
<dbReference type="ProteomicsDB" id="52151">
    <molecule id="P08651-4"/>
</dbReference>
<dbReference type="ProteomicsDB" id="52152">
    <molecule id="P08651-5"/>
</dbReference>
<dbReference type="Pumba" id="P08651"/>
<dbReference type="Antibodypedia" id="23195">
    <property type="antibodies" value="312 antibodies from 31 providers"/>
</dbReference>
<dbReference type="DNASU" id="4782"/>
<dbReference type="Ensembl" id="ENST00000341919.8">
    <molecule id="P08651-5"/>
    <property type="protein sequence ID" value="ENSP00000342194.2"/>
    <property type="gene ID" value="ENSG00000141905.19"/>
</dbReference>
<dbReference type="Ensembl" id="ENST00000395111.7">
    <molecule id="P08651-3"/>
    <property type="protein sequence ID" value="ENSP00000378543.2"/>
    <property type="gene ID" value="ENSG00000141905.19"/>
</dbReference>
<dbReference type="Ensembl" id="ENST00000443272.3">
    <molecule id="P08651-1"/>
    <property type="protein sequence ID" value="ENSP00000396843.2"/>
    <property type="gene ID" value="ENSG00000141905.19"/>
</dbReference>
<dbReference type="Ensembl" id="ENST00000586919.5">
    <molecule id="P08651-4"/>
    <property type="protein sequence ID" value="ENSP00000465177.1"/>
    <property type="gene ID" value="ENSG00000141905.19"/>
</dbReference>
<dbReference type="Ensembl" id="ENST00000589123.6">
    <molecule id="P08651-2"/>
    <property type="protein sequence ID" value="ENSP00000465655.1"/>
    <property type="gene ID" value="ENSG00000141905.19"/>
</dbReference>
<dbReference type="Ensembl" id="ENST00000590282.5">
    <molecule id="P08651-6"/>
    <property type="protein sequence ID" value="ENSP00000466647.1"/>
    <property type="gene ID" value="ENSG00000141905.19"/>
</dbReference>
<dbReference type="GeneID" id="4782"/>
<dbReference type="KEGG" id="hsa:4782"/>
<dbReference type="MANE-Select" id="ENST00000443272.3">
    <property type="protein sequence ID" value="ENSP00000396843.2"/>
    <property type="RefSeq nucleotide sequence ID" value="NM_001245002.2"/>
    <property type="RefSeq protein sequence ID" value="NP_001231931.1"/>
</dbReference>
<dbReference type="UCSC" id="uc002lxo.3">
    <molecule id="P08651-1"/>
    <property type="organism name" value="human"/>
</dbReference>
<dbReference type="AGR" id="HGNC:7786"/>
<dbReference type="CTD" id="4782"/>
<dbReference type="DisGeNET" id="4782"/>
<dbReference type="GeneCards" id="NFIC"/>
<dbReference type="HGNC" id="HGNC:7786">
    <property type="gene designation" value="NFIC"/>
</dbReference>
<dbReference type="HPA" id="ENSG00000141905">
    <property type="expression patterns" value="Tissue enriched (skeletal)"/>
</dbReference>
<dbReference type="MIM" id="600729">
    <property type="type" value="gene"/>
</dbReference>
<dbReference type="neXtProt" id="NX_P08651"/>
<dbReference type="OpenTargets" id="ENSG00000141905"/>
<dbReference type="PharmGKB" id="PA31592"/>
<dbReference type="VEuPathDB" id="HostDB:ENSG00000141905"/>
<dbReference type="eggNOG" id="KOG3663">
    <property type="taxonomic scope" value="Eukaryota"/>
</dbReference>
<dbReference type="GeneTree" id="ENSGT00950000182916"/>
<dbReference type="HOGENOM" id="CLU_012576_3_0_1"/>
<dbReference type="InParanoid" id="P08651"/>
<dbReference type="OMA" id="YFVRERX"/>
<dbReference type="OrthoDB" id="10055441at2759"/>
<dbReference type="PAN-GO" id="P08651">
    <property type="GO annotations" value="4 GO annotations based on evolutionary models"/>
</dbReference>
<dbReference type="PhylomeDB" id="P08651"/>
<dbReference type="PathwayCommons" id="P08651"/>
<dbReference type="Reactome" id="R-HSA-73980">
    <property type="pathway name" value="RNA Polymerase III Transcription Termination"/>
</dbReference>
<dbReference type="Reactome" id="R-HSA-749476">
    <property type="pathway name" value="RNA Polymerase III Abortive And Retractive Initiation"/>
</dbReference>
<dbReference type="SignaLink" id="P08651"/>
<dbReference type="SIGNOR" id="P08651"/>
<dbReference type="BioGRID-ORCS" id="4782">
    <property type="hits" value="31 hits in 1180 CRISPR screens"/>
</dbReference>
<dbReference type="ChiTaRS" id="NFIC">
    <property type="organism name" value="human"/>
</dbReference>
<dbReference type="GeneWiki" id="NFIC_(gene)"/>
<dbReference type="GenomeRNAi" id="4782"/>
<dbReference type="Pharos" id="P08651">
    <property type="development level" value="Tbio"/>
</dbReference>
<dbReference type="PRO" id="PR:P08651"/>
<dbReference type="Proteomes" id="UP000005640">
    <property type="component" value="Chromosome 19"/>
</dbReference>
<dbReference type="RNAct" id="P08651">
    <property type="molecule type" value="protein"/>
</dbReference>
<dbReference type="Bgee" id="ENSG00000141905">
    <property type="expression patterns" value="Expressed in nipple and 205 other cell types or tissues"/>
</dbReference>
<dbReference type="ExpressionAtlas" id="P08651">
    <property type="expression patterns" value="baseline and differential"/>
</dbReference>
<dbReference type="GO" id="GO:0000785">
    <property type="term" value="C:chromatin"/>
    <property type="evidence" value="ECO:0000247"/>
    <property type="project" value="NTNU_SB"/>
</dbReference>
<dbReference type="GO" id="GO:0001650">
    <property type="term" value="C:fibrillar center"/>
    <property type="evidence" value="ECO:0000314"/>
    <property type="project" value="HPA"/>
</dbReference>
<dbReference type="GO" id="GO:0005654">
    <property type="term" value="C:nucleoplasm"/>
    <property type="evidence" value="ECO:0000314"/>
    <property type="project" value="HPA"/>
</dbReference>
<dbReference type="GO" id="GO:0005634">
    <property type="term" value="C:nucleus"/>
    <property type="evidence" value="ECO:0000318"/>
    <property type="project" value="GO_Central"/>
</dbReference>
<dbReference type="GO" id="GO:0001228">
    <property type="term" value="F:DNA-binding transcription activator activity, RNA polymerase II-specific"/>
    <property type="evidence" value="ECO:0000314"/>
    <property type="project" value="NTNU_SB"/>
</dbReference>
<dbReference type="GO" id="GO:0003700">
    <property type="term" value="F:DNA-binding transcription factor activity"/>
    <property type="evidence" value="ECO:0000314"/>
    <property type="project" value="MGI"/>
</dbReference>
<dbReference type="GO" id="GO:0000981">
    <property type="term" value="F:DNA-binding transcription factor activity, RNA polymerase II-specific"/>
    <property type="evidence" value="ECO:0000247"/>
    <property type="project" value="NTNU_SB"/>
</dbReference>
<dbReference type="GO" id="GO:0000978">
    <property type="term" value="F:RNA polymerase II cis-regulatory region sequence-specific DNA binding"/>
    <property type="evidence" value="ECO:0000314"/>
    <property type="project" value="NTNU_SB"/>
</dbReference>
<dbReference type="GO" id="GO:1990837">
    <property type="term" value="F:sequence-specific double-stranded DNA binding"/>
    <property type="evidence" value="ECO:0000314"/>
    <property type="project" value="ARUK-UCL"/>
</dbReference>
<dbReference type="GO" id="GO:0006260">
    <property type="term" value="P:DNA replication"/>
    <property type="evidence" value="ECO:0007669"/>
    <property type="project" value="UniProtKB-KW"/>
</dbReference>
<dbReference type="GO" id="GO:0000122">
    <property type="term" value="P:negative regulation of transcription by RNA polymerase II"/>
    <property type="evidence" value="ECO:0000314"/>
    <property type="project" value="UniProtKB"/>
</dbReference>
<dbReference type="GO" id="GO:0042475">
    <property type="term" value="P:odontogenesis of dentin-containing tooth"/>
    <property type="evidence" value="ECO:0007669"/>
    <property type="project" value="Ensembl"/>
</dbReference>
<dbReference type="GO" id="GO:0045944">
    <property type="term" value="P:positive regulation of transcription by RNA polymerase II"/>
    <property type="evidence" value="ECO:0000314"/>
    <property type="project" value="UniProtKB"/>
</dbReference>
<dbReference type="GO" id="GO:0006357">
    <property type="term" value="P:regulation of transcription by RNA polymerase II"/>
    <property type="evidence" value="ECO:0000318"/>
    <property type="project" value="GO_Central"/>
</dbReference>
<dbReference type="GO" id="GO:0006366">
    <property type="term" value="P:transcription by RNA polymerase II"/>
    <property type="evidence" value="ECO:0000304"/>
    <property type="project" value="ProtInc"/>
</dbReference>
<dbReference type="InterPro" id="IPR000647">
    <property type="entry name" value="CTF/NFI"/>
</dbReference>
<dbReference type="InterPro" id="IPR020604">
    <property type="entry name" value="CTF/NFI_DNA-bd-dom"/>
</dbReference>
<dbReference type="InterPro" id="IPR019739">
    <property type="entry name" value="CTF/NFI_DNA-bd_CS"/>
</dbReference>
<dbReference type="InterPro" id="IPR019548">
    <property type="entry name" value="CTF/NFI_DNA-bd_N"/>
</dbReference>
<dbReference type="InterPro" id="IPR003619">
    <property type="entry name" value="MAD_homology1_Dwarfin-type"/>
</dbReference>
<dbReference type="PANTHER" id="PTHR11492:SF2">
    <property type="entry name" value="NUCLEAR FACTOR 1 C-TYPE"/>
    <property type="match status" value="1"/>
</dbReference>
<dbReference type="PANTHER" id="PTHR11492">
    <property type="entry name" value="NUCLEAR FACTOR I"/>
    <property type="match status" value="1"/>
</dbReference>
<dbReference type="Pfam" id="PF00859">
    <property type="entry name" value="CTF_NFI"/>
    <property type="match status" value="1"/>
</dbReference>
<dbReference type="Pfam" id="PF03165">
    <property type="entry name" value="MH1"/>
    <property type="match status" value="1"/>
</dbReference>
<dbReference type="Pfam" id="PF10524">
    <property type="entry name" value="NfI_DNAbd_pre-N"/>
    <property type="match status" value="1"/>
</dbReference>
<dbReference type="SMART" id="SM00523">
    <property type="entry name" value="DWA"/>
    <property type="match status" value="1"/>
</dbReference>
<dbReference type="PROSITE" id="PS00349">
    <property type="entry name" value="CTF_NFI_1"/>
    <property type="match status" value="1"/>
</dbReference>
<dbReference type="PROSITE" id="PS51080">
    <property type="entry name" value="CTF_NFI_2"/>
    <property type="match status" value="1"/>
</dbReference>
<gene>
    <name type="primary">NFIC</name>
    <name type="synonym">NFI</name>
</gene>
<sequence>MYSSPLCLTQDEFHPFIEALLPHVRAFAYTWFNLQARKRKYFKKHEKRMSKDEERAVKDELLGEKPEVKQKWASRLLAKLRKDIRPECREDFVLSITGKKAPGCVLSNPDQKGKMRRIDCLRQADKVWRLDLVMVILFKGIPLESTDGERLVKAAQCGHPVLCVQPHHIGVAVKELDLYLAYFVRERDAEQSGSPRTGMGSDQEDSKPITLDTTDFQESFVTSGVFSVTELIQVSRTPVVTGTGPNFSLGELQGHLAYDLNPASTGLRRTLPSTSSSGSKRHKSGSMEEDVDTSPGGDYYTSPSSPTSSSRNWTEDMEGGISSPVKKTEMDKSPFNSPSPQDSPRLSSFTQHHRPVIAVHSGIARSPHPSSALHFPTTSILPQTASTYFPHTAIRYPPHLNPQDPLKDLVSLACDPASQQPGPLNGSGQLKMPSHCLSAQMLAPPPPGLPRLALPPATKPATTSEGGATSPTSPSYSPPDTSPANRSFVGLGPRDPAGIYQAQSWYLG</sequence>
<organism>
    <name type="scientific">Homo sapiens</name>
    <name type="common">Human</name>
    <dbReference type="NCBI Taxonomy" id="9606"/>
    <lineage>
        <taxon>Eukaryota</taxon>
        <taxon>Metazoa</taxon>
        <taxon>Chordata</taxon>
        <taxon>Craniata</taxon>
        <taxon>Vertebrata</taxon>
        <taxon>Euteleostomi</taxon>
        <taxon>Mammalia</taxon>
        <taxon>Eutheria</taxon>
        <taxon>Euarchontoglires</taxon>
        <taxon>Primates</taxon>
        <taxon>Haplorrhini</taxon>
        <taxon>Catarrhini</taxon>
        <taxon>Hominidae</taxon>
        <taxon>Homo</taxon>
    </lineage>
</organism>
<protein>
    <recommendedName>
        <fullName>Nuclear factor 1 C-type</fullName>
        <shortName>NF1-C</shortName>
        <shortName>Nuclear factor 1/C</shortName>
    </recommendedName>
    <alternativeName>
        <fullName>CCAAT-box-binding transcription factor</fullName>
        <shortName>CTF</shortName>
    </alternativeName>
    <alternativeName>
        <fullName>Nuclear factor I/C</fullName>
        <shortName>NF-I/C</shortName>
        <shortName>NFI-C</shortName>
    </alternativeName>
    <alternativeName>
        <fullName>TGGCA-binding protein</fullName>
    </alternativeName>
</protein>
<feature type="chain" id="PRO_0000100199" description="Nuclear factor 1 C-type">
    <location>
        <begin position="1"/>
        <end position="508"/>
    </location>
</feature>
<feature type="DNA-binding region" description="CTF/NF-I" evidence="2">
    <location>
        <begin position="1"/>
        <end position="195"/>
    </location>
</feature>
<feature type="region of interest" description="Disordered" evidence="3">
    <location>
        <begin position="190"/>
        <end position="209"/>
    </location>
</feature>
<feature type="region of interest" description="Disordered" evidence="3">
    <location>
        <begin position="267"/>
        <end position="348"/>
    </location>
</feature>
<feature type="region of interest" description="Disordered" evidence="3">
    <location>
        <begin position="438"/>
        <end position="495"/>
    </location>
</feature>
<feature type="short sequence motif" description="9aaTAD" evidence="4">
    <location>
        <begin position="404"/>
        <end position="412"/>
    </location>
</feature>
<feature type="compositionally biased region" description="Low complexity" evidence="3">
    <location>
        <begin position="299"/>
        <end position="310"/>
    </location>
</feature>
<feature type="compositionally biased region" description="Polar residues" evidence="3">
    <location>
        <begin position="334"/>
        <end position="348"/>
    </location>
</feature>
<feature type="modified residue" description="N-acetylmethionine" evidence="14">
    <location>
        <position position="1"/>
    </location>
</feature>
<feature type="modified residue" description="Phosphoserine" evidence="14 17">
    <location>
        <position position="194"/>
    </location>
</feature>
<feature type="modified residue" description="Phosphoserine" evidence="12">
    <location>
        <position position="294"/>
    </location>
</feature>
<feature type="modified residue" description="Phosphotyrosine" evidence="1">
    <location>
        <position position="300"/>
    </location>
</feature>
<feature type="modified residue" description="Phosphoserine" evidence="1">
    <location>
        <position position="302"/>
    </location>
</feature>
<feature type="modified residue" description="Phosphoserine" evidence="17">
    <location>
        <position position="304"/>
    </location>
</feature>
<feature type="modified residue" description="Phosphoserine" evidence="15">
    <location>
        <position position="305"/>
    </location>
</feature>
<feature type="modified residue" description="Phosphoserine" evidence="12 14 15">
    <location>
        <position position="323"/>
    </location>
</feature>
<feature type="modified residue" description="Phosphoserine" evidence="10 12 13 14 15 17">
    <location>
        <position position="333"/>
    </location>
</feature>
<feature type="modified residue" description="Phosphoserine" evidence="14">
    <location>
        <position position="337"/>
    </location>
</feature>
<feature type="modified residue" description="Phosphoserine" evidence="12 14 15 17">
    <location>
        <position position="339"/>
    </location>
</feature>
<feature type="modified residue" description="Phosphoserine" evidence="11 14 15 17">
    <location>
        <position position="343"/>
    </location>
</feature>
<feature type="modified residue" description="Asymmetric dimethylarginine; alternate" evidence="16">
    <location>
        <position position="365"/>
    </location>
</feature>
<feature type="modified residue" description="Omega-N-methylarginine; alternate" evidence="16">
    <location>
        <position position="365"/>
    </location>
</feature>
<feature type="modified residue" description="Asymmetric dimethylarginine" evidence="16">
    <location>
        <position position="395"/>
    </location>
</feature>
<feature type="modified residue" description="Omega-N-methylarginine" evidence="16">
    <location>
        <position position="451"/>
    </location>
</feature>
<feature type="modified residue" description="Phosphoserine" evidence="17">
    <location>
        <position position="475"/>
    </location>
</feature>
<feature type="modified residue" description="Phosphoserine" evidence="17">
    <location>
        <position position="477"/>
    </location>
</feature>
<feature type="modified residue" description="Phosphoserine" evidence="14">
    <location>
        <position position="487"/>
    </location>
</feature>
<feature type="splice variant" id="VSP_003552" description="In isoform 1, isoform 2 and isoform 3." evidence="5 7">
    <original>MYSSPLCLTQ</original>
    <variation>M</variation>
    <location>
        <begin position="1"/>
        <end position="10"/>
    </location>
</feature>
<feature type="splice variant" id="VSP_003553" description="In isoform 3." evidence="7">
    <location>
        <begin position="188"/>
        <end position="211"/>
    </location>
</feature>
<feature type="splice variant" id="VSP_047539" description="In isoform 6." evidence="5">
    <original>LNGSGQLKMPSHCLSAQMLAPPPPGLPRLALPPATKPATTSEGGATSPTSPSYSPPDTSPANRSFVGLGPRDPAGIYQAQSWYLG</original>
    <variation>PTLRPTRPLQTVPLWD</variation>
    <location>
        <begin position="424"/>
        <end position="508"/>
    </location>
</feature>
<feature type="splice variant" id="VSP_003554" description="In isoform 5." evidence="6 8">
    <location>
        <begin position="424"/>
        <end position="503"/>
    </location>
</feature>
<feature type="splice variant" id="VSP_003555" description="In isoform 2 and isoform 3." evidence="5 7">
    <original>LNGSGQLKMPSHCLSA</original>
    <variation>PTLRPTRPLQTVPLWD</variation>
    <location>
        <begin position="424"/>
        <end position="439"/>
    </location>
</feature>
<feature type="splice variant" id="VSP_003556" description="In isoform 2 and isoform 3." evidence="5 7">
    <location>
        <begin position="440"/>
        <end position="508"/>
    </location>
</feature>
<feature type="sequence variant" id="VAR_057656" description="In dbSNP:rs10412720.">
    <original>A</original>
    <variation>S</variation>
    <location>
        <position position="417"/>
    </location>
</feature>
<feature type="sequence conflict" description="In Ref. 3; BAH12681." evidence="9" ref="3">
    <original>L</original>
    <variation>P</variation>
    <location>
        <position position="130"/>
    </location>
</feature>
<feature type="sequence conflict" description="In Ref. 2; CAA63440." evidence="9" ref="2">
    <original>D</original>
    <variation>V</variation>
    <location>
        <position position="212"/>
    </location>
</feature>
<feature type="sequence conflict" description="In Ref. 3; BAH12681." evidence="9" ref="3">
    <original>E</original>
    <variation>K</variation>
    <location>
        <position position="329"/>
    </location>
</feature>
<feature type="sequence conflict" description="In Ref. 3; BAH12681." evidence="9" ref="3">
    <original>H</original>
    <variation>Y</variation>
    <location>
        <position position="353"/>
    </location>
</feature>
<comment type="function">
    <text>Recognizes and binds the palindromic sequence 5'-TTGGCNNNNNGCCAA-3' present in viral and cellular promoters and in the origin of replication of adenovirus type 2. These proteins are individually capable of activating transcription and replication.</text>
</comment>
<comment type="subunit">
    <text>Binds DNA as a homodimer.</text>
</comment>
<comment type="interaction">
    <interactant intactId="EBI-741360">
        <id>P08651</id>
    </interactant>
    <interactant intactId="EBI-10963452">
        <id>O00712</id>
        <label>NFIB</label>
    </interactant>
    <organismsDiffer>false</organismsDiffer>
    <experiments>6</experiments>
</comment>
<comment type="interaction">
    <interactant intactId="EBI-741360">
        <id>P08651</id>
    </interactant>
    <interactant intactId="EBI-355676">
        <id>P09874</id>
        <label>PARP1</label>
    </interactant>
    <organismsDiffer>false</organismsDiffer>
    <experiments>2</experiments>
</comment>
<comment type="interaction">
    <interactant intactId="EBI-18939222">
        <id>P08651-5</id>
    </interactant>
    <interactant intactId="EBI-12001016">
        <id>P07101-3</id>
        <label>TH</label>
    </interactant>
    <organismsDiffer>false</organismsDiffer>
    <experiments>3</experiments>
</comment>
<comment type="subcellular location">
    <subcellularLocation>
        <location>Nucleus</location>
    </subcellularLocation>
</comment>
<comment type="alternative products">
    <event type="alternative splicing"/>
    <isoform>
        <id>P08651-1</id>
        <name>4</name>
        <sequence type="displayed"/>
    </isoform>
    <isoform>
        <id>P08651-2</id>
        <name>1</name>
        <sequence type="described" ref="VSP_003552"/>
    </isoform>
    <isoform>
        <id>P08651-3</id>
        <name>2</name>
        <sequence type="described" ref="VSP_003552 VSP_003555 VSP_003556"/>
    </isoform>
    <isoform>
        <id>P08651-4</id>
        <name>3</name>
        <sequence type="described" ref="VSP_003552 VSP_003553 VSP_003555 VSP_003556"/>
    </isoform>
    <isoform>
        <id>P08651-5</id>
        <name>5</name>
        <sequence type="described" ref="VSP_003554"/>
    </isoform>
    <isoform>
        <id>P08651-6</id>
        <name>6</name>
        <sequence type="described" ref="VSP_047539"/>
    </isoform>
</comment>
<comment type="domain">
    <text evidence="4">The 9aaTAD motif is a transactivation domain present in a large number of yeast and animal transcription factors.</text>
</comment>
<comment type="similarity">
    <text evidence="2">Belongs to the CTF/NF-I family.</text>
</comment>
<keyword id="KW-0007">Acetylation</keyword>
<keyword id="KW-0010">Activator</keyword>
<keyword id="KW-0025">Alternative splicing</keyword>
<keyword id="KW-0903">Direct protein sequencing</keyword>
<keyword id="KW-0235">DNA replication</keyword>
<keyword id="KW-0238">DNA-binding</keyword>
<keyword id="KW-0488">Methylation</keyword>
<keyword id="KW-0539">Nucleus</keyword>
<keyword id="KW-0597">Phosphoprotein</keyword>
<keyword id="KW-1267">Proteomics identification</keyword>
<keyword id="KW-1185">Reference proteome</keyword>
<keyword id="KW-0804">Transcription</keyword>
<keyword id="KW-0805">Transcription regulation</keyword>
<proteinExistence type="evidence at protein level"/>